<reference key="1">
    <citation type="journal article" date="2003" name="Mol. Microbiol.">
        <title>Genome-based analysis of virulence genes in a non-biofilm-forming Staphylococcus epidermidis strain (ATCC 12228).</title>
        <authorList>
            <person name="Zhang Y.-Q."/>
            <person name="Ren S.-X."/>
            <person name="Li H.-L."/>
            <person name="Wang Y.-X."/>
            <person name="Fu G."/>
            <person name="Yang J."/>
            <person name="Qin Z.-Q."/>
            <person name="Miao Y.-G."/>
            <person name="Wang W.-Y."/>
            <person name="Chen R.-S."/>
            <person name="Shen Y."/>
            <person name="Chen Z."/>
            <person name="Yuan Z.-H."/>
            <person name="Zhao G.-P."/>
            <person name="Qu D."/>
            <person name="Danchin A."/>
            <person name="Wen Y.-M."/>
        </authorList>
    </citation>
    <scope>NUCLEOTIDE SEQUENCE [LARGE SCALE GENOMIC DNA]</scope>
    <source>
        <strain>ATCC 12228 / FDA PCI 1200</strain>
    </source>
</reference>
<name>CH10_STAES</name>
<protein>
    <recommendedName>
        <fullName evidence="1">Co-chaperonin GroES</fullName>
    </recommendedName>
    <alternativeName>
        <fullName evidence="1">10 kDa chaperonin</fullName>
    </alternativeName>
    <alternativeName>
        <fullName evidence="1">Chaperonin-10</fullName>
        <shortName evidence="1">Cpn10</shortName>
    </alternativeName>
    <alternativeName>
        <fullName>Heat shock protein 10</fullName>
    </alternativeName>
</protein>
<sequence length="94" mass="10286">MLKPLGNRVIIEKKEQEQTTKSGIVLTDSAKEKSNEGVIIAVGQGRLLDNGTQVAPQVSEGDTIVFQQYAGTEVKRGDKTYLILNEEDILAIIE</sequence>
<organism>
    <name type="scientific">Staphylococcus epidermidis (strain ATCC 12228 / FDA PCI 1200)</name>
    <dbReference type="NCBI Taxonomy" id="176280"/>
    <lineage>
        <taxon>Bacteria</taxon>
        <taxon>Bacillati</taxon>
        <taxon>Bacillota</taxon>
        <taxon>Bacilli</taxon>
        <taxon>Bacillales</taxon>
        <taxon>Staphylococcaceae</taxon>
        <taxon>Staphylococcus</taxon>
    </lineage>
</organism>
<dbReference type="EMBL" id="AE015929">
    <property type="protein sequence ID" value="AAO05229.1"/>
    <property type="molecule type" value="Genomic_DNA"/>
</dbReference>
<dbReference type="RefSeq" id="NP_765185.1">
    <property type="nucleotide sequence ID" value="NC_004461.1"/>
</dbReference>
<dbReference type="RefSeq" id="WP_001830378.1">
    <property type="nucleotide sequence ID" value="NZ_WBME01000022.1"/>
</dbReference>
<dbReference type="SMR" id="P0C0N3"/>
<dbReference type="GeneID" id="50018270"/>
<dbReference type="KEGG" id="sep:SE_1630"/>
<dbReference type="PATRIC" id="fig|176280.10.peg.1596"/>
<dbReference type="eggNOG" id="COG0234">
    <property type="taxonomic scope" value="Bacteria"/>
</dbReference>
<dbReference type="HOGENOM" id="CLU_132825_2_1_9"/>
<dbReference type="OrthoDB" id="9806791at2"/>
<dbReference type="Proteomes" id="UP000001411">
    <property type="component" value="Chromosome"/>
</dbReference>
<dbReference type="GO" id="GO:0005737">
    <property type="term" value="C:cytoplasm"/>
    <property type="evidence" value="ECO:0007669"/>
    <property type="project" value="UniProtKB-SubCell"/>
</dbReference>
<dbReference type="GO" id="GO:0005524">
    <property type="term" value="F:ATP binding"/>
    <property type="evidence" value="ECO:0007669"/>
    <property type="project" value="InterPro"/>
</dbReference>
<dbReference type="GO" id="GO:0046872">
    <property type="term" value="F:metal ion binding"/>
    <property type="evidence" value="ECO:0007669"/>
    <property type="project" value="TreeGrafter"/>
</dbReference>
<dbReference type="GO" id="GO:0044183">
    <property type="term" value="F:protein folding chaperone"/>
    <property type="evidence" value="ECO:0007669"/>
    <property type="project" value="InterPro"/>
</dbReference>
<dbReference type="GO" id="GO:0051087">
    <property type="term" value="F:protein-folding chaperone binding"/>
    <property type="evidence" value="ECO:0007669"/>
    <property type="project" value="TreeGrafter"/>
</dbReference>
<dbReference type="GO" id="GO:0051082">
    <property type="term" value="F:unfolded protein binding"/>
    <property type="evidence" value="ECO:0007669"/>
    <property type="project" value="TreeGrafter"/>
</dbReference>
<dbReference type="GO" id="GO:0051085">
    <property type="term" value="P:chaperone cofactor-dependent protein refolding"/>
    <property type="evidence" value="ECO:0007669"/>
    <property type="project" value="TreeGrafter"/>
</dbReference>
<dbReference type="CDD" id="cd00320">
    <property type="entry name" value="cpn10"/>
    <property type="match status" value="1"/>
</dbReference>
<dbReference type="FunFam" id="2.30.33.40:FF:000001">
    <property type="entry name" value="10 kDa chaperonin"/>
    <property type="match status" value="1"/>
</dbReference>
<dbReference type="Gene3D" id="2.30.33.40">
    <property type="entry name" value="GroES chaperonin"/>
    <property type="match status" value="1"/>
</dbReference>
<dbReference type="HAMAP" id="MF_00580">
    <property type="entry name" value="CH10"/>
    <property type="match status" value="1"/>
</dbReference>
<dbReference type="InterPro" id="IPR020818">
    <property type="entry name" value="Chaperonin_GroES"/>
</dbReference>
<dbReference type="InterPro" id="IPR037124">
    <property type="entry name" value="Chaperonin_GroES_sf"/>
</dbReference>
<dbReference type="InterPro" id="IPR018369">
    <property type="entry name" value="Chaprnonin_Cpn10_CS"/>
</dbReference>
<dbReference type="InterPro" id="IPR011032">
    <property type="entry name" value="GroES-like_sf"/>
</dbReference>
<dbReference type="NCBIfam" id="NF001531">
    <property type="entry name" value="PRK00364.2-2"/>
    <property type="match status" value="1"/>
</dbReference>
<dbReference type="NCBIfam" id="NF001532">
    <property type="entry name" value="PRK00364.2-3"/>
    <property type="match status" value="1"/>
</dbReference>
<dbReference type="NCBIfam" id="NF001533">
    <property type="entry name" value="PRK00364.2-4"/>
    <property type="match status" value="1"/>
</dbReference>
<dbReference type="NCBIfam" id="NF001534">
    <property type="entry name" value="PRK00364.2-5"/>
    <property type="match status" value="1"/>
</dbReference>
<dbReference type="PANTHER" id="PTHR10772">
    <property type="entry name" value="10 KDA HEAT SHOCK PROTEIN"/>
    <property type="match status" value="1"/>
</dbReference>
<dbReference type="PANTHER" id="PTHR10772:SF58">
    <property type="entry name" value="CO-CHAPERONIN GROES"/>
    <property type="match status" value="1"/>
</dbReference>
<dbReference type="Pfam" id="PF00166">
    <property type="entry name" value="Cpn10"/>
    <property type="match status" value="1"/>
</dbReference>
<dbReference type="PRINTS" id="PR00297">
    <property type="entry name" value="CHAPERONIN10"/>
</dbReference>
<dbReference type="SMART" id="SM00883">
    <property type="entry name" value="Cpn10"/>
    <property type="match status" value="1"/>
</dbReference>
<dbReference type="SUPFAM" id="SSF50129">
    <property type="entry name" value="GroES-like"/>
    <property type="match status" value="1"/>
</dbReference>
<dbReference type="PROSITE" id="PS00681">
    <property type="entry name" value="CHAPERONINS_CPN10"/>
    <property type="match status" value="1"/>
</dbReference>
<gene>
    <name evidence="1" type="primary">groES</name>
    <name evidence="1" type="synonym">groS</name>
    <name type="ordered locus">SE_1630</name>
</gene>
<accession>P0C0N3</accession>
<accession>P48227</accession>
<proteinExistence type="inferred from homology"/>
<feature type="chain" id="PRO_0000174847" description="Co-chaperonin GroES">
    <location>
        <begin position="1"/>
        <end position="94"/>
    </location>
</feature>
<keyword id="KW-0143">Chaperone</keyword>
<keyword id="KW-0963">Cytoplasm</keyword>
<keyword id="KW-0346">Stress response</keyword>
<comment type="function">
    <text evidence="1">Together with the chaperonin GroEL, plays an essential role in assisting protein folding. The GroEL-GroES system forms a nano-cage that allows encapsulation of the non-native substrate proteins and provides a physical environment optimized to promote and accelerate protein folding. GroES binds to the apical surface of the GroEL ring, thereby capping the opening of the GroEL channel.</text>
</comment>
<comment type="subunit">
    <text evidence="1">Heptamer of 7 subunits arranged in a ring. Interacts with the chaperonin GroEL.</text>
</comment>
<comment type="subcellular location">
    <subcellularLocation>
        <location evidence="1">Cytoplasm</location>
    </subcellularLocation>
</comment>
<comment type="similarity">
    <text evidence="1 2">Belongs to the GroES chaperonin family.</text>
</comment>
<evidence type="ECO:0000255" key="1">
    <source>
        <dbReference type="HAMAP-Rule" id="MF_00580"/>
    </source>
</evidence>
<evidence type="ECO:0000305" key="2"/>